<proteinExistence type="inferred from homology"/>
<sequence>MLDKTLRMNYLFDFYQSLLTEKQRKYMSLYYLDDFSLGEIAEEFDVSRQAVYDNIKRTEAMLEEYEEKLSLLAKFEKRSEILQQLKEAVDKQATSEELMALLESLDTLE</sequence>
<reference key="1">
    <citation type="journal article" date="2000" name="Nucleic Acids Res.">
        <title>Complete genome sequence of the alkaliphilic bacterium Bacillus halodurans and genomic sequence comparison with Bacillus subtilis.</title>
        <authorList>
            <person name="Takami H."/>
            <person name="Nakasone K."/>
            <person name="Takaki Y."/>
            <person name="Maeno G."/>
            <person name="Sasaki R."/>
            <person name="Masui N."/>
            <person name="Fuji F."/>
            <person name="Hirama C."/>
            <person name="Nakamura Y."/>
            <person name="Ogasawara N."/>
            <person name="Kuhara S."/>
            <person name="Horikoshi K."/>
        </authorList>
    </citation>
    <scope>NUCLEOTIDE SEQUENCE [LARGE SCALE GENOMIC DNA]</scope>
    <source>
        <strain>ATCC BAA-125 / DSM 18197 / FERM 7344 / JCM 9153 / C-125</strain>
    </source>
</reference>
<name>Y2485_HALH5</name>
<feature type="chain" id="PRO_0000211860" description="UPF0122 protein BH2485">
    <location>
        <begin position="1"/>
        <end position="109"/>
    </location>
</feature>
<organism>
    <name type="scientific">Halalkalibacterium halodurans (strain ATCC BAA-125 / DSM 18197 / FERM 7344 / JCM 9153 / C-125)</name>
    <name type="common">Bacillus halodurans</name>
    <dbReference type="NCBI Taxonomy" id="272558"/>
    <lineage>
        <taxon>Bacteria</taxon>
        <taxon>Bacillati</taxon>
        <taxon>Bacillota</taxon>
        <taxon>Bacilli</taxon>
        <taxon>Bacillales</taxon>
        <taxon>Bacillaceae</taxon>
        <taxon>Halalkalibacterium (ex Joshi et al. 2022)</taxon>
    </lineage>
</organism>
<dbReference type="EMBL" id="BA000004">
    <property type="protein sequence ID" value="BAB06204.1"/>
    <property type="molecule type" value="Genomic_DNA"/>
</dbReference>
<dbReference type="PIR" id="E83960">
    <property type="entry name" value="E83960"/>
</dbReference>
<dbReference type="RefSeq" id="WP_010898636.1">
    <property type="nucleotide sequence ID" value="NC_002570.2"/>
</dbReference>
<dbReference type="SMR" id="Q9KA09"/>
<dbReference type="STRING" id="272558.gene:10728383"/>
<dbReference type="GeneID" id="87598004"/>
<dbReference type="KEGG" id="bha:BH2485"/>
<dbReference type="eggNOG" id="COG2739">
    <property type="taxonomic scope" value="Bacteria"/>
</dbReference>
<dbReference type="HOGENOM" id="CLU_129218_1_0_9"/>
<dbReference type="OrthoDB" id="6392at2"/>
<dbReference type="Proteomes" id="UP000001258">
    <property type="component" value="Chromosome"/>
</dbReference>
<dbReference type="Gene3D" id="1.10.10.10">
    <property type="entry name" value="Winged helix-like DNA-binding domain superfamily/Winged helix DNA-binding domain"/>
    <property type="match status" value="1"/>
</dbReference>
<dbReference type="HAMAP" id="MF_00245">
    <property type="entry name" value="UPF0122"/>
    <property type="match status" value="1"/>
</dbReference>
<dbReference type="InterPro" id="IPR013324">
    <property type="entry name" value="RNA_pol_sigma_r3/r4-like"/>
</dbReference>
<dbReference type="InterPro" id="IPR007394">
    <property type="entry name" value="UPF0122"/>
</dbReference>
<dbReference type="InterPro" id="IPR054831">
    <property type="entry name" value="UPF0122_fam_protein"/>
</dbReference>
<dbReference type="InterPro" id="IPR036388">
    <property type="entry name" value="WH-like_DNA-bd_sf"/>
</dbReference>
<dbReference type="NCBIfam" id="NF001068">
    <property type="entry name" value="PRK00118.1-4"/>
    <property type="match status" value="1"/>
</dbReference>
<dbReference type="NCBIfam" id="NF001070">
    <property type="entry name" value="PRK00118.1-6"/>
    <property type="match status" value="1"/>
</dbReference>
<dbReference type="NCBIfam" id="NF001072">
    <property type="entry name" value="PRK00118.2-2"/>
    <property type="match status" value="1"/>
</dbReference>
<dbReference type="NCBIfam" id="NF045758">
    <property type="entry name" value="YlxM"/>
    <property type="match status" value="1"/>
</dbReference>
<dbReference type="PANTHER" id="PTHR40083">
    <property type="entry name" value="UPF0122 PROTEIN CBO2450/CLC_2298"/>
    <property type="match status" value="1"/>
</dbReference>
<dbReference type="PANTHER" id="PTHR40083:SF1">
    <property type="entry name" value="UPF0122 PROTEIN YLXM"/>
    <property type="match status" value="1"/>
</dbReference>
<dbReference type="Pfam" id="PF04297">
    <property type="entry name" value="UPF0122"/>
    <property type="match status" value="1"/>
</dbReference>
<dbReference type="SUPFAM" id="SSF88659">
    <property type="entry name" value="Sigma3 and sigma4 domains of RNA polymerase sigma factors"/>
    <property type="match status" value="1"/>
</dbReference>
<comment type="function">
    <text evidence="1">Might take part in the signal recognition particle (SRP) pathway. This is inferred from the conservation of its genetic proximity to ftsY/ffh. May be a regulatory protein.</text>
</comment>
<comment type="similarity">
    <text evidence="1">Belongs to the UPF0122 family.</text>
</comment>
<gene>
    <name type="ordered locus">BH2485</name>
</gene>
<keyword id="KW-1185">Reference proteome</keyword>
<protein>
    <recommendedName>
        <fullName evidence="1">UPF0122 protein BH2485</fullName>
    </recommendedName>
</protein>
<accession>Q9KA09</accession>
<evidence type="ECO:0000255" key="1">
    <source>
        <dbReference type="HAMAP-Rule" id="MF_00245"/>
    </source>
</evidence>